<organism>
    <name type="scientific">Oryza sativa subsp. japonica</name>
    <name type="common">Rice</name>
    <dbReference type="NCBI Taxonomy" id="39947"/>
    <lineage>
        <taxon>Eukaryota</taxon>
        <taxon>Viridiplantae</taxon>
        <taxon>Streptophyta</taxon>
        <taxon>Embryophyta</taxon>
        <taxon>Tracheophyta</taxon>
        <taxon>Spermatophyta</taxon>
        <taxon>Magnoliopsida</taxon>
        <taxon>Liliopsida</taxon>
        <taxon>Poales</taxon>
        <taxon>Poaceae</taxon>
        <taxon>BOP clade</taxon>
        <taxon>Oryzoideae</taxon>
        <taxon>Oryzeae</taxon>
        <taxon>Oryzinae</taxon>
        <taxon>Oryza</taxon>
        <taxon>Oryza sativa</taxon>
    </lineage>
</organism>
<dbReference type="EMBL" id="L34271">
    <property type="protein sequence ID" value="AAA66187.1"/>
    <property type="molecule type" value="mRNA"/>
</dbReference>
<dbReference type="EMBL" id="AF204063">
    <property type="protein sequence ID" value="AAG35652.1"/>
    <property type="molecule type" value="Genomic_DNA"/>
</dbReference>
<dbReference type="EMBL" id="AC105732">
    <property type="status" value="NOT_ANNOTATED_CDS"/>
    <property type="molecule type" value="Genomic_DNA"/>
</dbReference>
<dbReference type="EMBL" id="AC135158">
    <property type="status" value="NOT_ANNOTATED_CDS"/>
    <property type="molecule type" value="Genomic_DNA"/>
</dbReference>
<dbReference type="EMBL" id="DP000009">
    <property type="protein sequence ID" value="ABF94637.1"/>
    <property type="molecule type" value="Genomic_DNA"/>
</dbReference>
<dbReference type="EMBL" id="AP008209">
    <property type="protein sequence ID" value="BAF11290.1"/>
    <property type="molecule type" value="Genomic_DNA"/>
</dbReference>
<dbReference type="EMBL" id="AP014959">
    <property type="protein sequence ID" value="BAS82963.1"/>
    <property type="molecule type" value="Genomic_DNA"/>
</dbReference>
<dbReference type="EMBL" id="CM000140">
    <property type="protein sequence ID" value="EEE58586.1"/>
    <property type="molecule type" value="Genomic_DNA"/>
</dbReference>
<dbReference type="EMBL" id="AK069728">
    <property type="protein sequence ID" value="BAG91573.1"/>
    <property type="molecule type" value="mRNA"/>
</dbReference>
<dbReference type="PIR" id="S53306">
    <property type="entry name" value="S53306"/>
</dbReference>
<dbReference type="RefSeq" id="XP_015628585.1">
    <property type="nucleotide sequence ID" value="XM_015773099.1"/>
</dbReference>
<dbReference type="SMR" id="Q10PZ9"/>
<dbReference type="BioGRID" id="801096">
    <property type="interactions" value="1"/>
</dbReference>
<dbReference type="FunCoup" id="Q10PZ9">
    <property type="interactions" value="31"/>
</dbReference>
<dbReference type="IntAct" id="Q10PZ9">
    <property type="interactions" value="4"/>
</dbReference>
<dbReference type="STRING" id="39947.Q10PZ9"/>
<dbReference type="PaxDb" id="39947-Q10PZ9"/>
<dbReference type="EnsemblPlants" id="Os03t0215400-01">
    <property type="protein sequence ID" value="Os03t0215400-01"/>
    <property type="gene ID" value="Os03g0215400"/>
</dbReference>
<dbReference type="Gramene" id="Os03t0215400-01">
    <property type="protein sequence ID" value="Os03t0215400-01"/>
    <property type="gene ID" value="Os03g0215400"/>
</dbReference>
<dbReference type="KEGG" id="dosa:Os03g0215400"/>
<dbReference type="eggNOG" id="KOG0014">
    <property type="taxonomic scope" value="Eukaryota"/>
</dbReference>
<dbReference type="HOGENOM" id="CLU_053053_0_2_1"/>
<dbReference type="InParanoid" id="Q10PZ9"/>
<dbReference type="OMA" id="GFFPGWT"/>
<dbReference type="OrthoDB" id="1898716at2759"/>
<dbReference type="PlantReactome" id="R-OSA-9608931">
    <property type="pathway name" value="Floral bracts development"/>
</dbReference>
<dbReference type="PlantReactome" id="R-OSA-9609102">
    <property type="pathway name" value="Flower development"/>
</dbReference>
<dbReference type="Proteomes" id="UP000000763">
    <property type="component" value="Chromosome 3"/>
</dbReference>
<dbReference type="Proteomes" id="UP000007752">
    <property type="component" value="Chromosome 3"/>
</dbReference>
<dbReference type="Proteomes" id="UP000059680">
    <property type="component" value="Chromosome 3"/>
</dbReference>
<dbReference type="GO" id="GO:0005634">
    <property type="term" value="C:nucleus"/>
    <property type="evidence" value="ECO:0007669"/>
    <property type="project" value="UniProtKB-SubCell"/>
</dbReference>
<dbReference type="GO" id="GO:0003677">
    <property type="term" value="F:DNA binding"/>
    <property type="evidence" value="ECO:0000304"/>
    <property type="project" value="AgBase"/>
</dbReference>
<dbReference type="GO" id="GO:0000981">
    <property type="term" value="F:DNA-binding transcription factor activity, RNA polymerase II-specific"/>
    <property type="evidence" value="ECO:0000318"/>
    <property type="project" value="GO_Central"/>
</dbReference>
<dbReference type="GO" id="GO:0046983">
    <property type="term" value="F:protein dimerization activity"/>
    <property type="evidence" value="ECO:0000304"/>
    <property type="project" value="AgBase"/>
</dbReference>
<dbReference type="GO" id="GO:0000978">
    <property type="term" value="F:RNA polymerase II cis-regulatory region sequence-specific DNA binding"/>
    <property type="evidence" value="ECO:0000318"/>
    <property type="project" value="GO_Central"/>
</dbReference>
<dbReference type="GO" id="GO:0008134">
    <property type="term" value="F:transcription factor binding"/>
    <property type="evidence" value="ECO:0000304"/>
    <property type="project" value="AgBase"/>
</dbReference>
<dbReference type="GO" id="GO:0030154">
    <property type="term" value="P:cell differentiation"/>
    <property type="evidence" value="ECO:0007669"/>
    <property type="project" value="UniProtKB-KW"/>
</dbReference>
<dbReference type="GO" id="GO:0010582">
    <property type="term" value="P:floral meristem determinacy"/>
    <property type="evidence" value="ECO:0000304"/>
    <property type="project" value="AgBase"/>
</dbReference>
<dbReference type="GO" id="GO:0010022">
    <property type="term" value="P:meristem determinacy"/>
    <property type="evidence" value="ECO:0000316"/>
    <property type="project" value="AgBase"/>
</dbReference>
<dbReference type="GO" id="GO:0045944">
    <property type="term" value="P:positive regulation of transcription by RNA polymerase II"/>
    <property type="evidence" value="ECO:0007669"/>
    <property type="project" value="InterPro"/>
</dbReference>
<dbReference type="GO" id="GO:0048509">
    <property type="term" value="P:regulation of meristem development"/>
    <property type="evidence" value="ECO:0000316"/>
    <property type="project" value="AgBase"/>
</dbReference>
<dbReference type="GO" id="GO:0006357">
    <property type="term" value="P:regulation of transcription by RNA polymerase II"/>
    <property type="evidence" value="ECO:0000318"/>
    <property type="project" value="GO_Central"/>
</dbReference>
<dbReference type="GO" id="GO:0010093">
    <property type="term" value="P:specification of floral organ identity"/>
    <property type="evidence" value="ECO:0000315"/>
    <property type="project" value="AgBase"/>
</dbReference>
<dbReference type="CDD" id="cd00265">
    <property type="entry name" value="MADS_MEF2_like"/>
    <property type="match status" value="1"/>
</dbReference>
<dbReference type="FunFam" id="3.40.1810.10:FF:000008">
    <property type="entry name" value="MADS-box transcription factor 1"/>
    <property type="match status" value="1"/>
</dbReference>
<dbReference type="Gene3D" id="3.40.1810.10">
    <property type="entry name" value="Transcription factor, MADS-box"/>
    <property type="match status" value="1"/>
</dbReference>
<dbReference type="InterPro" id="IPR050142">
    <property type="entry name" value="MADS-box/MEF2_TF"/>
</dbReference>
<dbReference type="InterPro" id="IPR033896">
    <property type="entry name" value="MEF2-like_N"/>
</dbReference>
<dbReference type="InterPro" id="IPR002487">
    <property type="entry name" value="TF_Kbox"/>
</dbReference>
<dbReference type="InterPro" id="IPR002100">
    <property type="entry name" value="TF_MADSbox"/>
</dbReference>
<dbReference type="InterPro" id="IPR036879">
    <property type="entry name" value="TF_MADSbox_sf"/>
</dbReference>
<dbReference type="PANTHER" id="PTHR48019">
    <property type="entry name" value="SERUM RESPONSE FACTOR HOMOLOG"/>
    <property type="match status" value="1"/>
</dbReference>
<dbReference type="Pfam" id="PF01486">
    <property type="entry name" value="K-box"/>
    <property type="match status" value="1"/>
</dbReference>
<dbReference type="Pfam" id="PF00319">
    <property type="entry name" value="SRF-TF"/>
    <property type="match status" value="1"/>
</dbReference>
<dbReference type="PRINTS" id="PR00404">
    <property type="entry name" value="MADSDOMAIN"/>
</dbReference>
<dbReference type="SMART" id="SM00432">
    <property type="entry name" value="MADS"/>
    <property type="match status" value="1"/>
</dbReference>
<dbReference type="SUPFAM" id="SSF55455">
    <property type="entry name" value="SRF-like"/>
    <property type="match status" value="1"/>
</dbReference>
<dbReference type="PROSITE" id="PS51297">
    <property type="entry name" value="K_BOX"/>
    <property type="match status" value="1"/>
</dbReference>
<dbReference type="PROSITE" id="PS00350">
    <property type="entry name" value="MADS_BOX_1"/>
    <property type="match status" value="1"/>
</dbReference>
<dbReference type="PROSITE" id="PS50066">
    <property type="entry name" value="MADS_BOX_2"/>
    <property type="match status" value="1"/>
</dbReference>
<keyword id="KW-0010">Activator</keyword>
<keyword id="KW-0217">Developmental protein</keyword>
<keyword id="KW-0221">Differentiation</keyword>
<keyword id="KW-0238">DNA-binding</keyword>
<keyword id="KW-0287">Flowering</keyword>
<keyword id="KW-0539">Nucleus</keyword>
<keyword id="KW-1185">Reference proteome</keyword>
<keyword id="KW-0804">Transcription</keyword>
<keyword id="KW-0805">Transcription regulation</keyword>
<gene>
    <name type="primary">MADS1</name>
    <name type="synonym">LHS1</name>
    <name type="ordered locus">Os03g0215400</name>
    <name type="ordered locus">LOC_Os03g11614</name>
    <name evidence="9" type="ORF">OsJ_09913</name>
</gene>
<protein>
    <recommendedName>
        <fullName>MADS-box transcription factor 1</fullName>
    </recommendedName>
    <alternativeName>
        <fullName>OsMADS1</fullName>
    </alternativeName>
    <alternativeName>
        <fullName>Protein LEAFY HULL STERILE 1</fullName>
    </alternativeName>
    <alternativeName>
        <fullName>Protein SEPALLATA-like</fullName>
    </alternativeName>
</protein>
<sequence>MGRGKVELKRIENKISRQVTFAKRRNGLLKKAYELSLLCDAEVALIIFSGRGRLFEFSSSSCMYKTLERYRSCNYNSQDAAAPENEINYQEYLKLKTRVEFLQTTQRNILGEDLGPLSMKELEQLENQIEVSLKQIRSRKNQALLDQLFDLKSKEQQLQDLNKDLRKKLQETSAENVLHMSWQDGGGHSGSSTVLADQPHHHQGLLHPHPDQGDHSLQIGYHHPHAHHHQAYMDHLSNEAADMVAHHPNEHIPSGWI</sequence>
<proteinExistence type="evidence at protein level"/>
<evidence type="ECO:0000255" key="1">
    <source>
        <dbReference type="PROSITE-ProRule" id="PRU00251"/>
    </source>
</evidence>
<evidence type="ECO:0000255" key="2">
    <source>
        <dbReference type="PROSITE-ProRule" id="PRU00629"/>
    </source>
</evidence>
<evidence type="ECO:0000269" key="3">
    <source>
    </source>
</evidence>
<evidence type="ECO:0000269" key="4">
    <source>
    </source>
</evidence>
<evidence type="ECO:0000269" key="5">
    <source>
    </source>
</evidence>
<evidence type="ECO:0000269" key="6">
    <source>
    </source>
</evidence>
<evidence type="ECO:0000269" key="7">
    <source ref="11"/>
</evidence>
<evidence type="ECO:0000305" key="8"/>
<evidence type="ECO:0000312" key="9">
    <source>
        <dbReference type="EMBL" id="EEE58586.1"/>
    </source>
</evidence>
<accession>Q10PZ9</accession>
<accession>B7EGS6</accession>
<accession>Q3ZES6</accession>
<accession>Q40700</accession>
<reference key="1">
    <citation type="journal article" date="1994" name="Plant Mol. Biol.">
        <title>Early flowering and reduced apical dominance result from ectopic expression of a rice MADS box gene.</title>
        <authorList>
            <person name="Chung Y.-Y."/>
            <person name="Kim S.-R."/>
            <person name="Finkel D."/>
            <person name="Yanofsky M.F."/>
            <person name="An G."/>
        </authorList>
    </citation>
    <scope>NUCLEOTIDE SEQUENCE [MRNA]</scope>
    <scope>FUNCTION</scope>
    <scope>TISSUE SPECIFICITY</scope>
    <source>
        <tissue>Flower</tissue>
    </source>
</reference>
<reference key="2">
    <citation type="journal article" date="2000" name="Plant Cell">
        <title>Leafy hull sterile1 is a homeotic mutation in a rice MADS box gene affecting rice flower development.</title>
        <authorList>
            <person name="Jeon J.-S."/>
            <person name="Jang S."/>
            <person name="Lee S."/>
            <person name="Nam J."/>
            <person name="Kim C."/>
            <person name="Lee S.-H."/>
            <person name="Chung Y.-Y."/>
            <person name="Kim S.-R."/>
            <person name="Lee Y.H."/>
            <person name="Cho Y.-G."/>
            <person name="An G."/>
        </authorList>
    </citation>
    <scope>NUCLEOTIDE SEQUENCE [GENOMIC DNA]</scope>
    <scope>FUNCTION</scope>
    <scope>DISRUPTION PHENOTYPE</scope>
    <scope>MUTAGENESIS OF ARG-24 AND GLY-27</scope>
</reference>
<reference key="3">
    <citation type="journal article" date="2005" name="Genome Res.">
        <title>Sequence, annotation, and analysis of synteny between rice chromosome 3 and diverged grass species.</title>
        <authorList>
            <consortium name="The rice chromosome 3 sequencing consortium"/>
            <person name="Buell C.R."/>
            <person name="Yuan Q."/>
            <person name="Ouyang S."/>
            <person name="Liu J."/>
            <person name="Zhu W."/>
            <person name="Wang A."/>
            <person name="Maiti R."/>
            <person name="Haas B."/>
            <person name="Wortman J."/>
            <person name="Pertea M."/>
            <person name="Jones K.M."/>
            <person name="Kim M."/>
            <person name="Overton L."/>
            <person name="Tsitrin T."/>
            <person name="Fadrosh D."/>
            <person name="Bera J."/>
            <person name="Weaver B."/>
            <person name="Jin S."/>
            <person name="Johri S."/>
            <person name="Reardon M."/>
            <person name="Webb K."/>
            <person name="Hill J."/>
            <person name="Moffat K."/>
            <person name="Tallon L."/>
            <person name="Van Aken S."/>
            <person name="Lewis M."/>
            <person name="Utterback T."/>
            <person name="Feldblyum T."/>
            <person name="Zismann V."/>
            <person name="Iobst S."/>
            <person name="Hsiao J."/>
            <person name="de Vazeille A.R."/>
            <person name="Salzberg S.L."/>
            <person name="White O."/>
            <person name="Fraser C.M."/>
            <person name="Yu Y."/>
            <person name="Kim H."/>
            <person name="Rambo T."/>
            <person name="Currie J."/>
            <person name="Collura K."/>
            <person name="Kernodle-Thompson S."/>
            <person name="Wei F."/>
            <person name="Kudrna K."/>
            <person name="Ammiraju J.S.S."/>
            <person name="Luo M."/>
            <person name="Goicoechea J.L."/>
            <person name="Wing R.A."/>
            <person name="Henry D."/>
            <person name="Oates R."/>
            <person name="Palmer M."/>
            <person name="Pries G."/>
            <person name="Saski C."/>
            <person name="Simmons J."/>
            <person name="Soderlund C."/>
            <person name="Nelson W."/>
            <person name="de la Bastide M."/>
            <person name="Spiegel L."/>
            <person name="Nascimento L."/>
            <person name="Huang E."/>
            <person name="Preston R."/>
            <person name="Zutavern T."/>
            <person name="Palmer L."/>
            <person name="O'Shaughnessy A."/>
            <person name="Dike S."/>
            <person name="McCombie W.R."/>
            <person name="Minx P."/>
            <person name="Cordum H."/>
            <person name="Wilson R."/>
            <person name="Jin W."/>
            <person name="Lee H.R."/>
            <person name="Jiang J."/>
            <person name="Jackson S."/>
        </authorList>
    </citation>
    <scope>NUCLEOTIDE SEQUENCE [LARGE SCALE GENOMIC DNA]</scope>
    <source>
        <strain>cv. Nipponbare</strain>
    </source>
</reference>
<reference key="4">
    <citation type="journal article" date="2005" name="Nature">
        <title>The map-based sequence of the rice genome.</title>
        <authorList>
            <consortium name="International rice genome sequencing project (IRGSP)"/>
        </authorList>
    </citation>
    <scope>NUCLEOTIDE SEQUENCE [LARGE SCALE GENOMIC DNA]</scope>
    <source>
        <strain>cv. Nipponbare</strain>
    </source>
</reference>
<reference key="5">
    <citation type="journal article" date="2008" name="Nucleic Acids Res.">
        <title>The rice annotation project database (RAP-DB): 2008 update.</title>
        <authorList>
            <consortium name="The rice annotation project (RAP)"/>
        </authorList>
    </citation>
    <scope>GENOME REANNOTATION</scope>
    <source>
        <strain>cv. Nipponbare</strain>
    </source>
</reference>
<reference key="6">
    <citation type="journal article" date="2013" name="Rice">
        <title>Improvement of the Oryza sativa Nipponbare reference genome using next generation sequence and optical map data.</title>
        <authorList>
            <person name="Kawahara Y."/>
            <person name="de la Bastide M."/>
            <person name="Hamilton J.P."/>
            <person name="Kanamori H."/>
            <person name="McCombie W.R."/>
            <person name="Ouyang S."/>
            <person name="Schwartz D.C."/>
            <person name="Tanaka T."/>
            <person name="Wu J."/>
            <person name="Zhou S."/>
            <person name="Childs K.L."/>
            <person name="Davidson R.M."/>
            <person name="Lin H."/>
            <person name="Quesada-Ocampo L."/>
            <person name="Vaillancourt B."/>
            <person name="Sakai H."/>
            <person name="Lee S.S."/>
            <person name="Kim J."/>
            <person name="Numa H."/>
            <person name="Itoh T."/>
            <person name="Buell C.R."/>
            <person name="Matsumoto T."/>
        </authorList>
    </citation>
    <scope>GENOME REANNOTATION</scope>
    <source>
        <strain>cv. Nipponbare</strain>
    </source>
</reference>
<reference key="7">
    <citation type="journal article" date="2005" name="PLoS Biol.">
        <title>The genomes of Oryza sativa: a history of duplications.</title>
        <authorList>
            <person name="Yu J."/>
            <person name="Wang J."/>
            <person name="Lin W."/>
            <person name="Li S."/>
            <person name="Li H."/>
            <person name="Zhou J."/>
            <person name="Ni P."/>
            <person name="Dong W."/>
            <person name="Hu S."/>
            <person name="Zeng C."/>
            <person name="Zhang J."/>
            <person name="Zhang Y."/>
            <person name="Li R."/>
            <person name="Xu Z."/>
            <person name="Li S."/>
            <person name="Li X."/>
            <person name="Zheng H."/>
            <person name="Cong L."/>
            <person name="Lin L."/>
            <person name="Yin J."/>
            <person name="Geng J."/>
            <person name="Li G."/>
            <person name="Shi J."/>
            <person name="Liu J."/>
            <person name="Lv H."/>
            <person name="Li J."/>
            <person name="Wang J."/>
            <person name="Deng Y."/>
            <person name="Ran L."/>
            <person name="Shi X."/>
            <person name="Wang X."/>
            <person name="Wu Q."/>
            <person name="Li C."/>
            <person name="Ren X."/>
            <person name="Wang J."/>
            <person name="Wang X."/>
            <person name="Li D."/>
            <person name="Liu D."/>
            <person name="Zhang X."/>
            <person name="Ji Z."/>
            <person name="Zhao W."/>
            <person name="Sun Y."/>
            <person name="Zhang Z."/>
            <person name="Bao J."/>
            <person name="Han Y."/>
            <person name="Dong L."/>
            <person name="Ji J."/>
            <person name="Chen P."/>
            <person name="Wu S."/>
            <person name="Liu J."/>
            <person name="Xiao Y."/>
            <person name="Bu D."/>
            <person name="Tan J."/>
            <person name="Yang L."/>
            <person name="Ye C."/>
            <person name="Zhang J."/>
            <person name="Xu J."/>
            <person name="Zhou Y."/>
            <person name="Yu Y."/>
            <person name="Zhang B."/>
            <person name="Zhuang S."/>
            <person name="Wei H."/>
            <person name="Liu B."/>
            <person name="Lei M."/>
            <person name="Yu H."/>
            <person name="Li Y."/>
            <person name="Xu H."/>
            <person name="Wei S."/>
            <person name="He X."/>
            <person name="Fang L."/>
            <person name="Zhang Z."/>
            <person name="Zhang Y."/>
            <person name="Huang X."/>
            <person name="Su Z."/>
            <person name="Tong W."/>
            <person name="Li J."/>
            <person name="Tong Z."/>
            <person name="Li S."/>
            <person name="Ye J."/>
            <person name="Wang L."/>
            <person name="Fang L."/>
            <person name="Lei T."/>
            <person name="Chen C.-S."/>
            <person name="Chen H.-C."/>
            <person name="Xu Z."/>
            <person name="Li H."/>
            <person name="Huang H."/>
            <person name="Zhang F."/>
            <person name="Xu H."/>
            <person name="Li N."/>
            <person name="Zhao C."/>
            <person name="Li S."/>
            <person name="Dong L."/>
            <person name="Huang Y."/>
            <person name="Li L."/>
            <person name="Xi Y."/>
            <person name="Qi Q."/>
            <person name="Li W."/>
            <person name="Zhang B."/>
            <person name="Hu W."/>
            <person name="Zhang Y."/>
            <person name="Tian X."/>
            <person name="Jiao Y."/>
            <person name="Liang X."/>
            <person name="Jin J."/>
            <person name="Gao L."/>
            <person name="Zheng W."/>
            <person name="Hao B."/>
            <person name="Liu S.-M."/>
            <person name="Wang W."/>
            <person name="Yuan L."/>
            <person name="Cao M."/>
            <person name="McDermott J."/>
            <person name="Samudrala R."/>
            <person name="Wang J."/>
            <person name="Wong G.K.-S."/>
            <person name="Yang H."/>
        </authorList>
    </citation>
    <scope>NUCLEOTIDE SEQUENCE [LARGE SCALE GENOMIC DNA]</scope>
    <source>
        <strain>cv. Nipponbare</strain>
    </source>
</reference>
<reference key="8">
    <citation type="journal article" date="2003" name="Science">
        <title>Collection, mapping, and annotation of over 28,000 cDNA clones from japonica rice.</title>
        <authorList>
            <consortium name="The rice full-length cDNA consortium"/>
        </authorList>
    </citation>
    <scope>NUCLEOTIDE SEQUENCE [LARGE SCALE MRNA]</scope>
    <source>
        <strain>cv. Nipponbare</strain>
    </source>
</reference>
<reference key="9">
    <citation type="journal article" date="1999" name="Plant Physiol.">
        <title>Determination of the motif responsible for interaction between the rice APETALA1/AGAMOUS-LIKE9 family proteins using a yeast two-hybrid system.</title>
        <authorList>
            <person name="Moon Y.-H."/>
            <person name="Kang H.-G."/>
            <person name="Jung J.-Y."/>
            <person name="Jeon J.-S."/>
            <person name="Sung S.-K."/>
            <person name="An G."/>
        </authorList>
    </citation>
    <scope>INTERACTION WITH MADS6</scope>
</reference>
<reference key="10">
    <citation type="journal article" date="2000" name="Plant Mol. Biol.">
        <title>Two rice MADS domain proteins interact with OsMADS1.</title>
        <authorList>
            <person name="Lim J."/>
            <person name="Moon Y.-H."/>
            <person name="An G."/>
            <person name="Jang S.K."/>
        </authorList>
    </citation>
    <scope>TRANSCRIPTIONAL ACTIVATOR</scope>
    <scope>INTERACTION WITH MADS14 AND MADS15</scope>
</reference>
<reference key="11">
    <citation type="journal article" date="2000" name="Mol. Breed.">
        <title>Production of transgenic rice plants showing reduced heading date and plant height by ectopic expression of rice MADS-box genes.</title>
        <authorList>
            <person name="Jeon J.-S."/>
            <person name="Lee S."/>
            <person name="Nam J."/>
            <person name="Jung K.-H."/>
            <person name="Yang W.-S."/>
            <person name="Yi G.-H."/>
            <person name="Oh B.-G."/>
            <person name="An G."/>
        </authorList>
        <dbReference type="AGRICOLA" id="IND22436162"/>
    </citation>
    <scope>FUNCTION</scope>
</reference>
<reference key="12">
    <citation type="journal article" date="2001" name="Dev. Genes Evol.">
        <title>Ectopic expression of rice OsMADS1 reveals a role in specifying the lemma and palea, grass floral organs analogous to sepals.</title>
        <authorList>
            <person name="Prasad K."/>
            <person name="Sriram P."/>
            <person name="Kumar C.S."/>
            <person name="Kushalappa K."/>
            <person name="Vijayraghavan U."/>
        </authorList>
    </citation>
    <scope>FUNCTION</scope>
    <scope>DEVELOPMENTAL STAGE</scope>
</reference>
<reference key="13">
    <citation type="journal article" date="2005" name="Plant Mol. Biol.">
        <title>Conservation of the E-function for floral organ identity in rice revealed by the analysis of tissue culture-induced loss-of-function mutants of the OsMADS1 gene.</title>
        <authorList>
            <person name="Agrawal G.K."/>
            <person name="Abe K."/>
            <person name="Yamazaki M."/>
            <person name="Miyao A."/>
            <person name="Hirochika H."/>
        </authorList>
    </citation>
    <scope>FUNCTION</scope>
</reference>
<name>MADS1_ORYSJ</name>
<feature type="chain" id="PRO_0000229892" description="MADS-box transcription factor 1">
    <location>
        <begin position="1"/>
        <end position="257"/>
    </location>
</feature>
<feature type="domain" description="MADS-box" evidence="1">
    <location>
        <begin position="1"/>
        <end position="61"/>
    </location>
</feature>
<feature type="domain" description="K-box" evidence="2">
    <location>
        <begin position="85"/>
        <end position="175"/>
    </location>
</feature>
<feature type="mutagenesis site" description="In lhs1; abnormal growth of spikelets and sterile flowers; when associated with D-27." evidence="3">
    <original>R</original>
    <variation>C</variation>
    <location>
        <position position="24"/>
    </location>
</feature>
<feature type="mutagenesis site" description="In lhs1; abnormal growth of spikelets and sterile flowers; when associated with C-24." evidence="3">
    <original>G</original>
    <variation>D</variation>
    <location>
        <position position="27"/>
    </location>
</feature>
<comment type="function">
    <text evidence="3 4 5 6 7">Probable transcription factor involved in the development of floral organs. Required for the formation of inner floral organs (lodicules, stamens and carpels, or whorls 2, 3 and 4) and the lemma and palea (whorl 1), which are grass floral organs analogous to sepals. May be involved in the control of flowering time. Seems to act as transcriptional activator. May act upstream of the auxin-responsive protein GH3.8.</text>
</comment>
<comment type="subunit">
    <text>May interact with the K-box of MADS6, MADS14 and MADS15.</text>
</comment>
<comment type="interaction">
    <interactant intactId="EBI-627957">
        <id>Q10PZ9</id>
    </interactant>
    <interactant intactId="EBI-627890">
        <id>Q10CQ1</id>
        <label>MADS14</label>
    </interactant>
    <organismsDiffer>false</organismsDiffer>
    <experiments>4</experiments>
</comment>
<comment type="interaction">
    <interactant intactId="EBI-627957">
        <id>Q10PZ9</id>
    </interactant>
    <interactant intactId="EBI-627918">
        <id>Q6Q9I2</id>
        <label>MADS15</label>
    </interactant>
    <organismsDiffer>false</organismsDiffer>
    <experiments>4</experiments>
</comment>
<comment type="interaction">
    <interactant intactId="EBI-627957">
        <id>Q10PZ9</id>
    </interactant>
    <interactant intactId="EBI-627980">
        <id>Q6EU39</id>
        <label>MADS6</label>
    </interactant>
    <organismsDiffer>false</organismsDiffer>
    <experiments>4</experiments>
</comment>
<comment type="subcellular location">
    <subcellularLocation>
        <location evidence="8">Nucleus</location>
    </subcellularLocation>
</comment>
<comment type="tissue specificity">
    <text evidence="6">Expressed in lemmas, paleas and pistils. Weakly expressed in carpels.</text>
</comment>
<comment type="developmental stage">
    <text evidence="4">Expressed at early stage of flower development in floral meristem, and at later stage in lemma, palea and carpel primordia.</text>
</comment>
<comment type="disruption phenotype">
    <text evidence="3">Homeotic transformation of lodicules, stamens and carpels into lemma- and palea-like structures.</text>
</comment>